<keyword id="KW-0223">Dioxygenase</keyword>
<keyword id="KW-0408">Iron</keyword>
<keyword id="KW-0479">Metal-binding</keyword>
<keyword id="KW-0560">Oxidoreductase</keyword>
<keyword id="KW-1185">Reference proteome</keyword>
<keyword id="KW-0847">Vitamin C</keyword>
<sequence length="225" mass="25472">MMYHIPGVLSPQDVARFREQLGQAEWVDGRVTTGAQGAQVKNNQQVDTRSTLYAALQNEVLNAVNQHALFFAAALPRTLSTPLFNRYQNNETYGFHVDGAVRSHPQNGWMRTDLSATLFLSDPESYDGGELVVNDTFGQHRVKLPAGDLVLYPSSSLHCVTPVTRGVRVASFMWIQSMIRDDKKRAMLFELDKNIQSLKSRYGESEEILSLLNLYHNLLREWSEI</sequence>
<feature type="chain" id="PRO_0000346521" description="PKHD-type hydroxylase YbiX">
    <location>
        <begin position="1"/>
        <end position="225"/>
    </location>
</feature>
<feature type="domain" description="Fe2OG dioxygenase" evidence="1">
    <location>
        <begin position="78"/>
        <end position="177"/>
    </location>
</feature>
<feature type="binding site" evidence="1">
    <location>
        <position position="96"/>
    </location>
    <ligand>
        <name>Fe cation</name>
        <dbReference type="ChEBI" id="CHEBI:24875"/>
    </ligand>
</feature>
<feature type="binding site" evidence="1">
    <location>
        <position position="98"/>
    </location>
    <ligand>
        <name>Fe cation</name>
        <dbReference type="ChEBI" id="CHEBI:24875"/>
    </ligand>
</feature>
<feature type="binding site" evidence="1">
    <location>
        <position position="158"/>
    </location>
    <ligand>
        <name>Fe cation</name>
        <dbReference type="ChEBI" id="CHEBI:24875"/>
    </ligand>
</feature>
<feature type="binding site" evidence="1">
    <location>
        <position position="168"/>
    </location>
    <ligand>
        <name>2-oxoglutarate</name>
        <dbReference type="ChEBI" id="CHEBI:16810"/>
    </ligand>
</feature>
<organism>
    <name type="scientific">Shigella dysenteriae serotype 1 (strain Sd197)</name>
    <dbReference type="NCBI Taxonomy" id="300267"/>
    <lineage>
        <taxon>Bacteria</taxon>
        <taxon>Pseudomonadati</taxon>
        <taxon>Pseudomonadota</taxon>
        <taxon>Gammaproteobacteria</taxon>
        <taxon>Enterobacterales</taxon>
        <taxon>Enterobacteriaceae</taxon>
        <taxon>Shigella</taxon>
    </lineage>
</organism>
<proteinExistence type="inferred from homology"/>
<comment type="cofactor">
    <cofactor evidence="1">
        <name>Fe(2+)</name>
        <dbReference type="ChEBI" id="CHEBI:29033"/>
    </cofactor>
    <text evidence="1">Binds 1 Fe(2+) ion per subunit.</text>
</comment>
<comment type="cofactor">
    <cofactor evidence="1">
        <name>L-ascorbate</name>
        <dbReference type="ChEBI" id="CHEBI:38290"/>
    </cofactor>
</comment>
<comment type="sequence caution" evidence="2">
    <conflict type="erroneous initiation">
        <sequence resource="EMBL-CDS" id="ABB60977"/>
    </conflict>
</comment>
<protein>
    <recommendedName>
        <fullName evidence="1">PKHD-type hydroxylase YbiX</fullName>
        <ecNumber evidence="1">1.14.11.-</ecNumber>
    </recommendedName>
</protein>
<gene>
    <name evidence="1" type="primary">ybiX</name>
    <name type="ordered locus">SDY_0795</name>
</gene>
<dbReference type="EC" id="1.14.11.-" evidence="1"/>
<dbReference type="EMBL" id="CP000034">
    <property type="protein sequence ID" value="ABB60977.1"/>
    <property type="status" value="ALT_INIT"/>
    <property type="molecule type" value="Genomic_DNA"/>
</dbReference>
<dbReference type="RefSeq" id="WP_000990186.1">
    <property type="nucleotide sequence ID" value="NC_007606.1"/>
</dbReference>
<dbReference type="RefSeq" id="YP_402466.2">
    <property type="nucleotide sequence ID" value="NC_007606.1"/>
</dbReference>
<dbReference type="SMR" id="Q32I80"/>
<dbReference type="STRING" id="300267.SDY_0795"/>
<dbReference type="EnsemblBacteria" id="ABB60977">
    <property type="protein sequence ID" value="ABB60977"/>
    <property type="gene ID" value="SDY_0795"/>
</dbReference>
<dbReference type="KEGG" id="sdy:SDY_0795"/>
<dbReference type="PATRIC" id="fig|300267.13.peg.918"/>
<dbReference type="HOGENOM" id="CLU_106663_0_0_6"/>
<dbReference type="Proteomes" id="UP000002716">
    <property type="component" value="Chromosome"/>
</dbReference>
<dbReference type="GO" id="GO:0016706">
    <property type="term" value="F:2-oxoglutarate-dependent dioxygenase activity"/>
    <property type="evidence" value="ECO:0007669"/>
    <property type="project" value="UniProtKB-UniRule"/>
</dbReference>
<dbReference type="GO" id="GO:0005506">
    <property type="term" value="F:iron ion binding"/>
    <property type="evidence" value="ECO:0007669"/>
    <property type="project" value="UniProtKB-UniRule"/>
</dbReference>
<dbReference type="GO" id="GO:0031418">
    <property type="term" value="F:L-ascorbic acid binding"/>
    <property type="evidence" value="ECO:0007669"/>
    <property type="project" value="UniProtKB-KW"/>
</dbReference>
<dbReference type="GO" id="GO:0006974">
    <property type="term" value="P:DNA damage response"/>
    <property type="evidence" value="ECO:0007669"/>
    <property type="project" value="TreeGrafter"/>
</dbReference>
<dbReference type="GO" id="GO:0006879">
    <property type="term" value="P:intracellular iron ion homeostasis"/>
    <property type="evidence" value="ECO:0007669"/>
    <property type="project" value="TreeGrafter"/>
</dbReference>
<dbReference type="FunFam" id="2.60.120.620:FF:000006">
    <property type="entry name" value="PKHD-type hydroxylase YbiX"/>
    <property type="match status" value="1"/>
</dbReference>
<dbReference type="FunFam" id="4.10.860.20:FF:000001">
    <property type="entry name" value="PKHD-type hydroxylase YbiX"/>
    <property type="match status" value="1"/>
</dbReference>
<dbReference type="Gene3D" id="2.60.120.620">
    <property type="entry name" value="q2cbj1_9rhob like domain"/>
    <property type="match status" value="1"/>
</dbReference>
<dbReference type="Gene3D" id="4.10.860.20">
    <property type="entry name" value="Rabenosyn, Rab binding domain"/>
    <property type="match status" value="1"/>
</dbReference>
<dbReference type="HAMAP" id="MF_00657">
    <property type="entry name" value="Hydroxyl_YbiX"/>
    <property type="match status" value="1"/>
</dbReference>
<dbReference type="InterPro" id="IPR005123">
    <property type="entry name" value="Oxoglu/Fe-dep_dioxygenase_dom"/>
</dbReference>
<dbReference type="InterPro" id="IPR041097">
    <property type="entry name" value="PKHD_C"/>
</dbReference>
<dbReference type="InterPro" id="IPR023550">
    <property type="entry name" value="PKHD_hydroxylase"/>
</dbReference>
<dbReference type="InterPro" id="IPR006620">
    <property type="entry name" value="Pro_4_hyd_alph"/>
</dbReference>
<dbReference type="InterPro" id="IPR044862">
    <property type="entry name" value="Pro_4_hyd_alph_FE2OG_OXY"/>
</dbReference>
<dbReference type="NCBIfam" id="NF003972">
    <property type="entry name" value="PRK05467.1-1"/>
    <property type="match status" value="1"/>
</dbReference>
<dbReference type="NCBIfam" id="NF003974">
    <property type="entry name" value="PRK05467.1-3"/>
    <property type="match status" value="1"/>
</dbReference>
<dbReference type="NCBIfam" id="NF003975">
    <property type="entry name" value="PRK05467.1-4"/>
    <property type="match status" value="1"/>
</dbReference>
<dbReference type="PANTHER" id="PTHR41536">
    <property type="entry name" value="PKHD-TYPE HYDROXYLASE YBIX"/>
    <property type="match status" value="1"/>
</dbReference>
<dbReference type="PANTHER" id="PTHR41536:SF1">
    <property type="entry name" value="PKHD-TYPE HYDROXYLASE YBIX"/>
    <property type="match status" value="1"/>
</dbReference>
<dbReference type="Pfam" id="PF13640">
    <property type="entry name" value="2OG-FeII_Oxy_3"/>
    <property type="match status" value="1"/>
</dbReference>
<dbReference type="Pfam" id="PF18331">
    <property type="entry name" value="PKHD_C"/>
    <property type="match status" value="1"/>
</dbReference>
<dbReference type="SMART" id="SM00702">
    <property type="entry name" value="P4Hc"/>
    <property type="match status" value="1"/>
</dbReference>
<dbReference type="SUPFAM" id="SSF51197">
    <property type="entry name" value="Clavaminate synthase-like"/>
    <property type="match status" value="1"/>
</dbReference>
<dbReference type="PROSITE" id="PS51471">
    <property type="entry name" value="FE2OG_OXY"/>
    <property type="match status" value="1"/>
</dbReference>
<reference key="1">
    <citation type="journal article" date="2005" name="Nucleic Acids Res.">
        <title>Genome dynamics and diversity of Shigella species, the etiologic agents of bacillary dysentery.</title>
        <authorList>
            <person name="Yang F."/>
            <person name="Yang J."/>
            <person name="Zhang X."/>
            <person name="Chen L."/>
            <person name="Jiang Y."/>
            <person name="Yan Y."/>
            <person name="Tang X."/>
            <person name="Wang J."/>
            <person name="Xiong Z."/>
            <person name="Dong J."/>
            <person name="Xue Y."/>
            <person name="Zhu Y."/>
            <person name="Xu X."/>
            <person name="Sun L."/>
            <person name="Chen S."/>
            <person name="Nie H."/>
            <person name="Peng J."/>
            <person name="Xu J."/>
            <person name="Wang Y."/>
            <person name="Yuan Z."/>
            <person name="Wen Y."/>
            <person name="Yao Z."/>
            <person name="Shen Y."/>
            <person name="Qiang B."/>
            <person name="Hou Y."/>
            <person name="Yu J."/>
            <person name="Jin Q."/>
        </authorList>
    </citation>
    <scope>NUCLEOTIDE SEQUENCE [LARGE SCALE GENOMIC DNA]</scope>
    <source>
        <strain>Sd197</strain>
    </source>
</reference>
<name>YBIX_SHIDS</name>
<accession>Q32I80</accession>
<evidence type="ECO:0000255" key="1">
    <source>
        <dbReference type="HAMAP-Rule" id="MF_00657"/>
    </source>
</evidence>
<evidence type="ECO:0000305" key="2"/>